<organism>
    <name type="scientific">Mus musculus</name>
    <name type="common">Mouse</name>
    <dbReference type="NCBI Taxonomy" id="10090"/>
    <lineage>
        <taxon>Eukaryota</taxon>
        <taxon>Metazoa</taxon>
        <taxon>Chordata</taxon>
        <taxon>Craniata</taxon>
        <taxon>Vertebrata</taxon>
        <taxon>Euteleostomi</taxon>
        <taxon>Mammalia</taxon>
        <taxon>Eutheria</taxon>
        <taxon>Euarchontoglires</taxon>
        <taxon>Glires</taxon>
        <taxon>Rodentia</taxon>
        <taxon>Myomorpha</taxon>
        <taxon>Muroidea</taxon>
        <taxon>Muridae</taxon>
        <taxon>Murinae</taxon>
        <taxon>Mus</taxon>
        <taxon>Mus</taxon>
    </lineage>
</organism>
<evidence type="ECO:0000256" key="1">
    <source>
        <dbReference type="SAM" id="MobiDB-lite"/>
    </source>
</evidence>
<evidence type="ECO:0000269" key="2">
    <source ref="1"/>
</evidence>
<name>WDR93_MOUSE</name>
<comment type="tissue specificity">
    <text evidence="2">Testis-specific. Expressed in spermatogonia, spermatocytes and spermatids.</text>
</comment>
<feature type="chain" id="PRO_0000319604" description="WD repeat-containing protein 93">
    <location>
        <begin position="1"/>
        <end position="695"/>
    </location>
</feature>
<feature type="repeat" description="WD">
    <location>
        <begin position="421"/>
        <end position="460"/>
    </location>
</feature>
<feature type="region of interest" description="Disordered" evidence="1">
    <location>
        <begin position="1"/>
        <end position="35"/>
    </location>
</feature>
<accession>Q402B2</accession>
<accession>B9EKH5</accession>
<reference key="1">
    <citation type="journal article" date="2005" name="Reprod. Med. Biol.">
        <title>Isolation and characterization of novel testis-specific genes from mouse pachytene spermatocyte-enriched cDNA library.</title>
        <authorList>
            <person name="Ijiri T.W."/>
            <person name="Nagase T."/>
            <person name="Matsuda Y."/>
        </authorList>
    </citation>
    <scope>NUCLEOTIDE SEQUENCE [MRNA]</scope>
    <scope>TISSUE SPECIFICITY</scope>
    <source>
        <strain>C57BL/6J</strain>
        <tissue>Testis</tissue>
    </source>
</reference>
<reference key="2">
    <citation type="journal article" date="2004" name="Genome Res.">
        <title>The status, quality, and expansion of the NIH full-length cDNA project: the Mammalian Gene Collection (MGC).</title>
        <authorList>
            <consortium name="The MGC Project Team"/>
        </authorList>
    </citation>
    <scope>NUCLEOTIDE SEQUENCE [LARGE SCALE MRNA]</scope>
    <source>
        <tissue>Testis</tissue>
    </source>
</reference>
<protein>
    <recommendedName>
        <fullName>WD repeat-containing protein 93</fullName>
    </recommendedName>
    <alternativeName>
        <fullName>Protein MA0035</fullName>
    </alternativeName>
</protein>
<dbReference type="EMBL" id="AB205021">
    <property type="protein sequence ID" value="BAE19974.1"/>
    <property type="molecule type" value="mRNA"/>
</dbReference>
<dbReference type="EMBL" id="BC150920">
    <property type="protein sequence ID" value="AAI50921.1"/>
    <property type="molecule type" value="mRNA"/>
</dbReference>
<dbReference type="CCDS" id="CCDS39992.1"/>
<dbReference type="RefSeq" id="NP_001033016.1">
    <property type="nucleotide sequence ID" value="NM_001037927.1"/>
</dbReference>
<dbReference type="RefSeq" id="NP_001368919.1">
    <property type="nucleotide sequence ID" value="NM_001381990.1"/>
</dbReference>
<dbReference type="RefSeq" id="NP_001368921.1">
    <property type="nucleotide sequence ID" value="NM_001381992.1"/>
</dbReference>
<dbReference type="RefSeq" id="NP_001408451.1">
    <property type="nucleotide sequence ID" value="NM_001421522.1"/>
</dbReference>
<dbReference type="RefSeq" id="XP_006541110.1">
    <property type="nucleotide sequence ID" value="XM_006541047.3"/>
</dbReference>
<dbReference type="RefSeq" id="XP_006541112.1">
    <property type="nucleotide sequence ID" value="XM_006541049.3"/>
</dbReference>
<dbReference type="RefSeq" id="XP_030098714.1">
    <property type="nucleotide sequence ID" value="XM_030242854.1"/>
</dbReference>
<dbReference type="SMR" id="Q402B2"/>
<dbReference type="FunCoup" id="Q402B2">
    <property type="interactions" value="11"/>
</dbReference>
<dbReference type="STRING" id="10090.ENSMUSP00000037467"/>
<dbReference type="PhosphoSitePlus" id="Q402B2"/>
<dbReference type="jPOST" id="Q402B2"/>
<dbReference type="PaxDb" id="10090-ENSMUSP00000037467"/>
<dbReference type="ProteomicsDB" id="299761"/>
<dbReference type="Antibodypedia" id="54557">
    <property type="antibodies" value="65 antibodies from 15 providers"/>
</dbReference>
<dbReference type="Ensembl" id="ENSMUST00000035622.8">
    <property type="protein sequence ID" value="ENSMUSP00000037467.8"/>
    <property type="gene ID" value="ENSMUSG00000039099.8"/>
</dbReference>
<dbReference type="GeneID" id="626359"/>
<dbReference type="KEGG" id="mmu:626359"/>
<dbReference type="UCSC" id="uc009hza.1">
    <property type="organism name" value="mouse"/>
</dbReference>
<dbReference type="AGR" id="MGI:3646885"/>
<dbReference type="CTD" id="56964"/>
<dbReference type="MGI" id="MGI:3646885">
    <property type="gene designation" value="Wdr93"/>
</dbReference>
<dbReference type="VEuPathDB" id="HostDB:ENSMUSG00000039099"/>
<dbReference type="eggNOG" id="ENOG502QW2J">
    <property type="taxonomic scope" value="Eukaryota"/>
</dbReference>
<dbReference type="GeneTree" id="ENSGT00390000009995"/>
<dbReference type="HOGENOM" id="CLU_025331_0_0_1"/>
<dbReference type="InParanoid" id="Q402B2"/>
<dbReference type="OMA" id="YSHETES"/>
<dbReference type="OrthoDB" id="547231at2759"/>
<dbReference type="PhylomeDB" id="Q402B2"/>
<dbReference type="TreeFam" id="TF336347"/>
<dbReference type="BioGRID-ORCS" id="626359">
    <property type="hits" value="2 hits in 78 CRISPR screens"/>
</dbReference>
<dbReference type="PRO" id="PR:Q402B2"/>
<dbReference type="Proteomes" id="UP000000589">
    <property type="component" value="Chromosome 7"/>
</dbReference>
<dbReference type="RNAct" id="Q402B2">
    <property type="molecule type" value="protein"/>
</dbReference>
<dbReference type="Bgee" id="ENSMUSG00000039099">
    <property type="expression patterns" value="Expressed in spermatocyte and 39 other cell types or tissues"/>
</dbReference>
<dbReference type="GO" id="GO:0022900">
    <property type="term" value="P:electron transport chain"/>
    <property type="evidence" value="ECO:0007669"/>
    <property type="project" value="InterPro"/>
</dbReference>
<dbReference type="Gene3D" id="2.130.10.10">
    <property type="entry name" value="YVTN repeat-like/Quinoprotein amine dehydrogenase"/>
    <property type="match status" value="1"/>
</dbReference>
<dbReference type="InterPro" id="IPR006885">
    <property type="entry name" value="NADH_UbQ_FeS_4_mit-like"/>
</dbReference>
<dbReference type="InterPro" id="IPR015943">
    <property type="entry name" value="WD40/YVTN_repeat-like_dom_sf"/>
</dbReference>
<dbReference type="InterPro" id="IPR036322">
    <property type="entry name" value="WD40_repeat_dom_sf"/>
</dbReference>
<dbReference type="InterPro" id="IPR049547">
    <property type="entry name" value="WDR93_beta_propeller"/>
</dbReference>
<dbReference type="PANTHER" id="PTHR12219">
    <property type="entry name" value="NADH-UBIQUINONE OXIDOREDUCTASE"/>
    <property type="match status" value="1"/>
</dbReference>
<dbReference type="PANTHER" id="PTHR12219:SF17">
    <property type="entry name" value="WD REPEAT-CONTAINING PROTEIN 93"/>
    <property type="match status" value="1"/>
</dbReference>
<dbReference type="Pfam" id="PF21030">
    <property type="entry name" value="WDR93"/>
    <property type="match status" value="1"/>
</dbReference>
<dbReference type="SUPFAM" id="SSF50978">
    <property type="entry name" value="WD40 repeat-like"/>
    <property type="match status" value="1"/>
</dbReference>
<dbReference type="PROSITE" id="PS00678">
    <property type="entry name" value="WD_REPEATS_1"/>
    <property type="match status" value="1"/>
</dbReference>
<gene>
    <name type="primary">Wdr93</name>
</gene>
<sequence>MSSFKGNQAQKRRLSVFPKGPLEIPSPTEADWPKDDEKDFVFKDLDQELDSLPQPYRMINKLVDHLFNRSWEIIEERDSLREVEKNWIVPAIYHPVAEIQLDKMPGGMAVSHDYLFIGGLKGFSIYNLHNCKRIYVLEKFKADVISIWATDLGNDVLIVPIDEMGIVRLFYLCKDSLYHIKAINEVDDSSKQSTCLKMEISQNGDFAAFLFQGAGDVWLEVYKLPKEIWLKEMEHPQSTLNQKKKAKQLQLSTPDSAVTESIETSSGPSVSSNSVQDLNISFKSDLKLSLPVFVMKIKPPKPIAGTTFKSPLEVFAKVEDYVGLGSGQNHFIKDVQWEQHMETFYASYKKHLEGEWEEEPLSMATFHFFYTNSLTTMSMDVKSSSGIACVLGIHWNGRHNLFFYSLNKTQKDKTEYENVWPCAAPIVMSQISSFSSYLALVCEDGVLILWDLAEGFLFGVVALPEGCFCQSIHFLRFFLVHEGQNVYPDYPVKFEVMCVVLCTDASLHLVTASGTQGPTSKVLVGRPVMHMEEAICAVAPVPALPGMVLIFSRSQSVTLMDVAKAEVLCAFSAPTCHPQALPWKPLFAVSPHHPYFLLHGAHPHGQTTSTEDPKKSTDSVFYFNFEDYLLLKDISKKCTISQMAVNFSQMLPVEKRCEQVFQKSIQMTKTQMKGREQWSRLRKYSIMLQKELLKR</sequence>
<proteinExistence type="evidence at transcript level"/>
<keyword id="KW-1185">Reference proteome</keyword>
<keyword id="KW-0853">WD repeat</keyword>